<name>SARR_STAAR</name>
<sequence length="115" mass="13669">MSKINDINDLVNATFQVKKFFRDTKKKFNLNYEEIYILNHILRSESNEISSKEIAKCSEFKPYYLTKALQKLKDLKLLSKKRSLQDERTVIVYVTDTQKANIQKLISELEEYIKN</sequence>
<comment type="function">
    <text evidence="1">Negative regulator of sarA transcription at late exponential and stationary growth phases. It contributes to the modulation of target genes downstream of the sarA regulatory cascade. Also, positively regulates expression of primary transcripts RNAII and RNAIII generated by agr (virulence accessory gene regulator) locus (By similarity).</text>
</comment>
<comment type="subunit">
    <text evidence="1">Homodimer.</text>
</comment>
<comment type="subcellular location">
    <subcellularLocation>
        <location evidence="1">Cytoplasm</location>
    </subcellularLocation>
</comment>
<comment type="similarity">
    <text evidence="3">Belongs to the SarA family.</text>
</comment>
<proteinExistence type="inferred from homology"/>
<dbReference type="EMBL" id="BX571856">
    <property type="protein sequence ID" value="CAG41360.1"/>
    <property type="molecule type" value="Genomic_DNA"/>
</dbReference>
<dbReference type="RefSeq" id="WP_000036076.1">
    <property type="nucleotide sequence ID" value="NC_002952.2"/>
</dbReference>
<dbReference type="SMR" id="Q6GED9"/>
<dbReference type="KEGG" id="sar:SAR2379"/>
<dbReference type="HOGENOM" id="CLU_164084_0_0_9"/>
<dbReference type="Proteomes" id="UP000000596">
    <property type="component" value="Chromosome"/>
</dbReference>
<dbReference type="GO" id="GO:0005737">
    <property type="term" value="C:cytoplasm"/>
    <property type="evidence" value="ECO:0007669"/>
    <property type="project" value="UniProtKB-SubCell"/>
</dbReference>
<dbReference type="GO" id="GO:0003677">
    <property type="term" value="F:DNA binding"/>
    <property type="evidence" value="ECO:0007669"/>
    <property type="project" value="UniProtKB-KW"/>
</dbReference>
<dbReference type="GO" id="GO:0003700">
    <property type="term" value="F:DNA-binding transcription factor activity"/>
    <property type="evidence" value="ECO:0007669"/>
    <property type="project" value="InterPro"/>
</dbReference>
<dbReference type="GO" id="GO:0006950">
    <property type="term" value="P:response to stress"/>
    <property type="evidence" value="ECO:0007669"/>
    <property type="project" value="TreeGrafter"/>
</dbReference>
<dbReference type="FunFam" id="1.10.10.10:FF:000578">
    <property type="entry name" value="HTH-type transcriptional regulator SarR"/>
    <property type="match status" value="1"/>
</dbReference>
<dbReference type="Gene3D" id="1.10.10.10">
    <property type="entry name" value="Winged helix-like DNA-binding domain superfamily/Winged helix DNA-binding domain"/>
    <property type="match status" value="1"/>
</dbReference>
<dbReference type="InterPro" id="IPR039422">
    <property type="entry name" value="MarR/SlyA-like"/>
</dbReference>
<dbReference type="InterPro" id="IPR010166">
    <property type="entry name" value="SarA/Rot_dom"/>
</dbReference>
<dbReference type="InterPro" id="IPR055166">
    <property type="entry name" value="Transc_reg_Sar_Rot_HTH"/>
</dbReference>
<dbReference type="InterPro" id="IPR036388">
    <property type="entry name" value="WH-like_DNA-bd_sf"/>
</dbReference>
<dbReference type="InterPro" id="IPR036390">
    <property type="entry name" value="WH_DNA-bd_sf"/>
</dbReference>
<dbReference type="NCBIfam" id="TIGR01889">
    <property type="entry name" value="Staph_reg_Sar"/>
    <property type="match status" value="1"/>
</dbReference>
<dbReference type="PANTHER" id="PTHR33164:SF56">
    <property type="entry name" value="HTH-TYPE TRANSCRIPTIONAL REGULATOR MHQR"/>
    <property type="match status" value="1"/>
</dbReference>
<dbReference type="PANTHER" id="PTHR33164">
    <property type="entry name" value="TRANSCRIPTIONAL REGULATOR, MARR FAMILY"/>
    <property type="match status" value="1"/>
</dbReference>
<dbReference type="Pfam" id="PF22381">
    <property type="entry name" value="Staph_reg_Sar_Rot"/>
    <property type="match status" value="1"/>
</dbReference>
<dbReference type="SUPFAM" id="SSF46785">
    <property type="entry name" value="Winged helix' DNA-binding domain"/>
    <property type="match status" value="1"/>
</dbReference>
<protein>
    <recommendedName>
        <fullName>HTH-type transcriptional regulator SarR</fullName>
    </recommendedName>
    <alternativeName>
        <fullName>Staphylococcal accessory regulator R</fullName>
    </alternativeName>
</protein>
<gene>
    <name type="primary">sarR</name>
    <name type="ordered locus">SAR2379</name>
</gene>
<organism>
    <name type="scientific">Staphylococcus aureus (strain MRSA252)</name>
    <dbReference type="NCBI Taxonomy" id="282458"/>
    <lineage>
        <taxon>Bacteria</taxon>
        <taxon>Bacillati</taxon>
        <taxon>Bacillota</taxon>
        <taxon>Bacilli</taxon>
        <taxon>Bacillales</taxon>
        <taxon>Staphylococcaceae</taxon>
        <taxon>Staphylococcus</taxon>
    </lineage>
</organism>
<accession>Q6GED9</accession>
<keyword id="KW-0010">Activator</keyword>
<keyword id="KW-0963">Cytoplasm</keyword>
<keyword id="KW-0238">DNA-binding</keyword>
<keyword id="KW-0678">Repressor</keyword>
<keyword id="KW-0804">Transcription</keyword>
<keyword id="KW-0805">Transcription regulation</keyword>
<keyword id="KW-0843">Virulence</keyword>
<feature type="initiator methionine" description="Removed" evidence="1">
    <location>
        <position position="1"/>
    </location>
</feature>
<feature type="chain" id="PRO_0000219587" description="HTH-type transcriptional regulator SarR">
    <location>
        <begin position="2"/>
        <end position="115"/>
    </location>
</feature>
<feature type="DNA-binding region" description="H-T-H motif" evidence="2">
    <location>
        <begin position="51"/>
        <end position="74"/>
    </location>
</feature>
<reference key="1">
    <citation type="journal article" date="2004" name="Proc. Natl. Acad. Sci. U.S.A.">
        <title>Complete genomes of two clinical Staphylococcus aureus strains: evidence for the rapid evolution of virulence and drug resistance.</title>
        <authorList>
            <person name="Holden M.T.G."/>
            <person name="Feil E.J."/>
            <person name="Lindsay J.A."/>
            <person name="Peacock S.J."/>
            <person name="Day N.P.J."/>
            <person name="Enright M.C."/>
            <person name="Foster T.J."/>
            <person name="Moore C.E."/>
            <person name="Hurst L."/>
            <person name="Atkin R."/>
            <person name="Barron A."/>
            <person name="Bason N."/>
            <person name="Bentley S.D."/>
            <person name="Chillingworth C."/>
            <person name="Chillingworth T."/>
            <person name="Churcher C."/>
            <person name="Clark L."/>
            <person name="Corton C."/>
            <person name="Cronin A."/>
            <person name="Doggett J."/>
            <person name="Dowd L."/>
            <person name="Feltwell T."/>
            <person name="Hance Z."/>
            <person name="Harris B."/>
            <person name="Hauser H."/>
            <person name="Holroyd S."/>
            <person name="Jagels K."/>
            <person name="James K.D."/>
            <person name="Lennard N."/>
            <person name="Line A."/>
            <person name="Mayes R."/>
            <person name="Moule S."/>
            <person name="Mungall K."/>
            <person name="Ormond D."/>
            <person name="Quail M.A."/>
            <person name="Rabbinowitsch E."/>
            <person name="Rutherford K.M."/>
            <person name="Sanders M."/>
            <person name="Sharp S."/>
            <person name="Simmonds M."/>
            <person name="Stevens K."/>
            <person name="Whitehead S."/>
            <person name="Barrell B.G."/>
            <person name="Spratt B.G."/>
            <person name="Parkhill J."/>
        </authorList>
    </citation>
    <scope>NUCLEOTIDE SEQUENCE [LARGE SCALE GENOMIC DNA]</scope>
    <source>
        <strain>MRSA252</strain>
    </source>
</reference>
<evidence type="ECO:0000250" key="1"/>
<evidence type="ECO:0000255" key="2"/>
<evidence type="ECO:0000305" key="3"/>